<accession>C6DAW6</accession>
<gene>
    <name evidence="1" type="primary">arnC</name>
    <name type="ordered locus">PC1_2927</name>
</gene>
<reference key="1">
    <citation type="submission" date="2009-07" db="EMBL/GenBank/DDBJ databases">
        <title>Complete sequence of Pectobacterium carotovorum subsp. carotovorum PC1.</title>
        <authorList>
            <consortium name="US DOE Joint Genome Institute"/>
            <person name="Lucas S."/>
            <person name="Copeland A."/>
            <person name="Lapidus A."/>
            <person name="Glavina del Rio T."/>
            <person name="Tice H."/>
            <person name="Bruce D."/>
            <person name="Goodwin L."/>
            <person name="Pitluck S."/>
            <person name="Munk A.C."/>
            <person name="Brettin T."/>
            <person name="Detter J.C."/>
            <person name="Han C."/>
            <person name="Tapia R."/>
            <person name="Larimer F."/>
            <person name="Land M."/>
            <person name="Hauser L."/>
            <person name="Kyrpides N."/>
            <person name="Mikhailova N."/>
            <person name="Balakrishnan V."/>
            <person name="Glasner J."/>
            <person name="Perna N.T."/>
        </authorList>
    </citation>
    <scope>NUCLEOTIDE SEQUENCE [LARGE SCALE GENOMIC DNA]</scope>
    <source>
        <strain>PC1</strain>
    </source>
</reference>
<name>ARNC_PECCP</name>
<evidence type="ECO:0000255" key="1">
    <source>
        <dbReference type="HAMAP-Rule" id="MF_01164"/>
    </source>
</evidence>
<feature type="chain" id="PRO_1000213726" description="Undecaprenyl-phosphate 4-deoxy-4-formamido-L-arabinose transferase">
    <location>
        <begin position="1"/>
        <end position="327"/>
    </location>
</feature>
<feature type="transmembrane region" description="Helical" evidence="1">
    <location>
        <begin position="233"/>
        <end position="253"/>
    </location>
</feature>
<feature type="transmembrane region" description="Helical" evidence="1">
    <location>
        <begin position="268"/>
        <end position="288"/>
    </location>
</feature>
<proteinExistence type="inferred from homology"/>
<comment type="function">
    <text evidence="1">Catalyzes the transfer of 4-deoxy-4-formamido-L-arabinose from UDP to undecaprenyl phosphate. The modified arabinose is attached to lipid A and is required for resistance to polymyxin and cationic antimicrobial peptides.</text>
</comment>
<comment type="catalytic activity">
    <reaction evidence="1">
        <text>UDP-4-deoxy-4-formamido-beta-L-arabinose + di-trans,octa-cis-undecaprenyl phosphate = 4-deoxy-4-formamido-alpha-L-arabinopyranosyl di-trans,octa-cis-undecaprenyl phosphate + UDP</text>
        <dbReference type="Rhea" id="RHEA:27722"/>
        <dbReference type="ChEBI" id="CHEBI:58223"/>
        <dbReference type="ChEBI" id="CHEBI:58709"/>
        <dbReference type="ChEBI" id="CHEBI:58909"/>
        <dbReference type="ChEBI" id="CHEBI:60392"/>
        <dbReference type="EC" id="2.4.2.53"/>
    </reaction>
</comment>
<comment type="pathway">
    <text evidence="1">Glycolipid biosynthesis; 4-amino-4-deoxy-alpha-L-arabinose undecaprenyl phosphate biosynthesis; 4-amino-4-deoxy-alpha-L-arabinose undecaprenyl phosphate from UDP-4-deoxy-4-formamido-beta-L-arabinose and undecaprenyl phosphate: step 1/2.</text>
</comment>
<comment type="pathway">
    <text evidence="1">Bacterial outer membrane biogenesis; lipopolysaccharide biosynthesis.</text>
</comment>
<comment type="subcellular location">
    <subcellularLocation>
        <location evidence="1">Cell inner membrane</location>
        <topology evidence="1">Multi-pass membrane protein</topology>
    </subcellularLocation>
</comment>
<comment type="similarity">
    <text evidence="1">Belongs to the glycosyltransferase 2 family.</text>
</comment>
<protein>
    <recommendedName>
        <fullName evidence="1">Undecaprenyl-phosphate 4-deoxy-4-formamido-L-arabinose transferase</fullName>
        <ecNumber evidence="1">2.4.2.53</ecNumber>
    </recommendedName>
    <alternativeName>
        <fullName evidence="1">Undecaprenyl-phosphate Ara4FN transferase</fullName>
        <shortName evidence="1">Ara4FN transferase</shortName>
    </alternativeName>
</protein>
<sequence length="327" mass="36484">MIDDIKNVSVVIPVYNEEESLPVLIERTLAACRQIGKPWEIILVDDGSSDRSAELLTEAASDPEKHIIAVLLNRNYGQHSAIMAGFQQAVGDVVITLDADLQNPPEEIPRLVEYAAQGYDVVGTVRANRQDSLFRKLASKTINMMIRRSTGKSMADYGCMLRAYRRHIVSAMLHCHERSTFIPILANTFARKTIEIDVMHAEREFGTSKYSFLKLINLMYDLLTCLTTTPLRILSLIGSVVALSGFLLALLLIGLRLFLGAEWAAEGVFTLFAVLFMFIGAQFVGMGLLGEYIGRIYTDVRARPRYFVQKTVSAATPLTTSLRDEEE</sequence>
<keyword id="KW-0046">Antibiotic resistance</keyword>
<keyword id="KW-0997">Cell inner membrane</keyword>
<keyword id="KW-1003">Cell membrane</keyword>
<keyword id="KW-0328">Glycosyltransferase</keyword>
<keyword id="KW-0441">Lipid A biosynthesis</keyword>
<keyword id="KW-0444">Lipid biosynthesis</keyword>
<keyword id="KW-0443">Lipid metabolism</keyword>
<keyword id="KW-0448">Lipopolysaccharide biosynthesis</keyword>
<keyword id="KW-0472">Membrane</keyword>
<keyword id="KW-0808">Transferase</keyword>
<keyword id="KW-0812">Transmembrane</keyword>
<keyword id="KW-1133">Transmembrane helix</keyword>
<dbReference type="EC" id="2.4.2.53" evidence="1"/>
<dbReference type="EMBL" id="CP001657">
    <property type="protein sequence ID" value="ACT13950.1"/>
    <property type="molecule type" value="Genomic_DNA"/>
</dbReference>
<dbReference type="RefSeq" id="WP_015841106.1">
    <property type="nucleotide sequence ID" value="NC_012917.1"/>
</dbReference>
<dbReference type="SMR" id="C6DAW6"/>
<dbReference type="STRING" id="561230.PC1_2927"/>
<dbReference type="CAZy" id="GT2">
    <property type="family name" value="Glycosyltransferase Family 2"/>
</dbReference>
<dbReference type="KEGG" id="pct:PC1_2927"/>
<dbReference type="eggNOG" id="COG0463">
    <property type="taxonomic scope" value="Bacteria"/>
</dbReference>
<dbReference type="HOGENOM" id="CLU_033536_0_0_6"/>
<dbReference type="OrthoDB" id="9811884at2"/>
<dbReference type="UniPathway" id="UPA00030"/>
<dbReference type="UniPathway" id="UPA00036">
    <property type="reaction ID" value="UER00495"/>
</dbReference>
<dbReference type="Proteomes" id="UP000002736">
    <property type="component" value="Chromosome"/>
</dbReference>
<dbReference type="GO" id="GO:0005886">
    <property type="term" value="C:plasma membrane"/>
    <property type="evidence" value="ECO:0007669"/>
    <property type="project" value="UniProtKB-SubCell"/>
</dbReference>
<dbReference type="GO" id="GO:0016780">
    <property type="term" value="F:phosphotransferase activity, for other substituted phosphate groups"/>
    <property type="evidence" value="ECO:0007669"/>
    <property type="project" value="UniProtKB-UniRule"/>
</dbReference>
<dbReference type="GO" id="GO:0099621">
    <property type="term" value="F:undecaprenyl-phosphate 4-deoxy-4-formamido-L-arabinose transferase activity"/>
    <property type="evidence" value="ECO:0007669"/>
    <property type="project" value="UniProtKB-EC"/>
</dbReference>
<dbReference type="GO" id="GO:0036108">
    <property type="term" value="P:4-amino-4-deoxy-alpha-L-arabinopyranosyl undecaprenyl phosphate biosynthetic process"/>
    <property type="evidence" value="ECO:0007669"/>
    <property type="project" value="UniProtKB-UniRule"/>
</dbReference>
<dbReference type="GO" id="GO:0009245">
    <property type="term" value="P:lipid A biosynthetic process"/>
    <property type="evidence" value="ECO:0007669"/>
    <property type="project" value="UniProtKB-UniRule"/>
</dbReference>
<dbReference type="GO" id="GO:0009103">
    <property type="term" value="P:lipopolysaccharide biosynthetic process"/>
    <property type="evidence" value="ECO:0007669"/>
    <property type="project" value="UniProtKB-UniRule"/>
</dbReference>
<dbReference type="GO" id="GO:0046677">
    <property type="term" value="P:response to antibiotic"/>
    <property type="evidence" value="ECO:0007669"/>
    <property type="project" value="UniProtKB-KW"/>
</dbReference>
<dbReference type="CDD" id="cd04187">
    <property type="entry name" value="DPM1_like_bac"/>
    <property type="match status" value="1"/>
</dbReference>
<dbReference type="FunFam" id="3.90.550.10:FF:000019">
    <property type="entry name" value="Undecaprenyl-phosphate 4-deoxy-4-formamido-L-arabinose transferase"/>
    <property type="match status" value="1"/>
</dbReference>
<dbReference type="Gene3D" id="3.90.550.10">
    <property type="entry name" value="Spore Coat Polysaccharide Biosynthesis Protein SpsA, Chain A"/>
    <property type="match status" value="1"/>
</dbReference>
<dbReference type="HAMAP" id="MF_01164">
    <property type="entry name" value="ArnC_transfer"/>
    <property type="match status" value="1"/>
</dbReference>
<dbReference type="InterPro" id="IPR022857">
    <property type="entry name" value="ArnC_tfrase"/>
</dbReference>
<dbReference type="InterPro" id="IPR001173">
    <property type="entry name" value="Glyco_trans_2-like"/>
</dbReference>
<dbReference type="InterPro" id="IPR050256">
    <property type="entry name" value="Glycosyltransferase_2"/>
</dbReference>
<dbReference type="InterPro" id="IPR029044">
    <property type="entry name" value="Nucleotide-diphossugar_trans"/>
</dbReference>
<dbReference type="NCBIfam" id="NF007986">
    <property type="entry name" value="PRK10714.1"/>
    <property type="match status" value="1"/>
</dbReference>
<dbReference type="PANTHER" id="PTHR48090:SF3">
    <property type="entry name" value="UNDECAPRENYL-PHOSPHATE 4-DEOXY-4-FORMAMIDO-L-ARABINOSE TRANSFERASE"/>
    <property type="match status" value="1"/>
</dbReference>
<dbReference type="PANTHER" id="PTHR48090">
    <property type="entry name" value="UNDECAPRENYL-PHOSPHATE 4-DEOXY-4-FORMAMIDO-L-ARABINOSE TRANSFERASE-RELATED"/>
    <property type="match status" value="1"/>
</dbReference>
<dbReference type="Pfam" id="PF00535">
    <property type="entry name" value="Glycos_transf_2"/>
    <property type="match status" value="1"/>
</dbReference>
<dbReference type="SUPFAM" id="SSF53448">
    <property type="entry name" value="Nucleotide-diphospho-sugar transferases"/>
    <property type="match status" value="1"/>
</dbReference>
<organism>
    <name type="scientific">Pectobacterium carotovorum subsp. carotovorum (strain PC1)</name>
    <dbReference type="NCBI Taxonomy" id="561230"/>
    <lineage>
        <taxon>Bacteria</taxon>
        <taxon>Pseudomonadati</taxon>
        <taxon>Pseudomonadota</taxon>
        <taxon>Gammaproteobacteria</taxon>
        <taxon>Enterobacterales</taxon>
        <taxon>Pectobacteriaceae</taxon>
        <taxon>Pectobacterium</taxon>
    </lineage>
</organism>